<keyword id="KW-0002">3D-structure</keyword>
<keyword id="KW-0150">Chloroplast</keyword>
<keyword id="KW-0472">Membrane</keyword>
<keyword id="KW-0602">Photosynthesis</keyword>
<keyword id="KW-0604">Photosystem II</keyword>
<keyword id="KW-0934">Plastid</keyword>
<keyword id="KW-0674">Reaction center</keyword>
<keyword id="KW-0793">Thylakoid</keyword>
<keyword id="KW-0812">Transmembrane</keyword>
<keyword id="KW-1133">Transmembrane helix</keyword>
<accession>A0T0U0</accession>
<dbReference type="EMBL" id="EF067921">
    <property type="protein sequence ID" value="ABK20775.1"/>
    <property type="molecule type" value="Genomic_DNA"/>
</dbReference>
<dbReference type="RefSeq" id="YP_874552.1">
    <property type="nucleotide sequence ID" value="NC_008589.1"/>
</dbReference>
<dbReference type="PDB" id="8IWH">
    <property type="method" value="EM"/>
    <property type="resolution" value="2.68 A"/>
    <property type="chains" value="L/l=1-38"/>
</dbReference>
<dbReference type="PDBsum" id="8IWH"/>
<dbReference type="EMDB" id="EMD-35766"/>
<dbReference type="SMR" id="A0T0U0"/>
<dbReference type="STRING" id="35128.A0T0U0"/>
<dbReference type="GeneID" id="4524847"/>
<dbReference type="InParanoid" id="A0T0U0"/>
<dbReference type="GO" id="GO:0009535">
    <property type="term" value="C:chloroplast thylakoid membrane"/>
    <property type="evidence" value="ECO:0007669"/>
    <property type="project" value="UniProtKB-SubCell"/>
</dbReference>
<dbReference type="GO" id="GO:0009539">
    <property type="term" value="C:photosystem II reaction center"/>
    <property type="evidence" value="ECO:0007669"/>
    <property type="project" value="InterPro"/>
</dbReference>
<dbReference type="GO" id="GO:0015979">
    <property type="term" value="P:photosynthesis"/>
    <property type="evidence" value="ECO:0007669"/>
    <property type="project" value="UniProtKB-UniRule"/>
</dbReference>
<dbReference type="HAMAP" id="MF_01317">
    <property type="entry name" value="PSII_PsbL"/>
    <property type="match status" value="1"/>
</dbReference>
<dbReference type="InterPro" id="IPR003372">
    <property type="entry name" value="PSII_PsbL"/>
</dbReference>
<dbReference type="InterPro" id="IPR037266">
    <property type="entry name" value="PSII_PsbL_sf"/>
</dbReference>
<dbReference type="NCBIfam" id="NF001972">
    <property type="entry name" value="PRK00753.1"/>
    <property type="match status" value="1"/>
</dbReference>
<dbReference type="Pfam" id="PF02419">
    <property type="entry name" value="PsbL"/>
    <property type="match status" value="1"/>
</dbReference>
<dbReference type="SUPFAM" id="SSF161017">
    <property type="entry name" value="Photosystem II reaction center protein L, PsbL"/>
    <property type="match status" value="1"/>
</dbReference>
<reference key="1">
    <citation type="journal article" date="2007" name="Mol. Genet. Genomics">
        <title>Chloroplast genomes of the diatoms Phaeodactylum tricornutum and Thalassiosira pseudonana: comparison with other plastid genomes of the red lineage.</title>
        <authorList>
            <person name="Oudot-Le Secq M.-P."/>
            <person name="Grimwood J."/>
            <person name="Shapiro H."/>
            <person name="Armbrust E.V."/>
            <person name="Bowler C."/>
            <person name="Green B.R."/>
        </authorList>
    </citation>
    <scope>NUCLEOTIDE SEQUENCE [LARGE SCALE GENOMIC DNA]</scope>
    <source>
        <strain>CCMP1335 / NEPCC58 / CCAP 1085/12</strain>
    </source>
</reference>
<feature type="chain" id="PRO_0000276230" description="Photosystem II reaction center protein L">
    <location>
        <begin position="1"/>
        <end position="38"/>
    </location>
</feature>
<feature type="transmembrane region" description="Helical" evidence="1">
    <location>
        <begin position="17"/>
        <end position="37"/>
    </location>
</feature>
<feature type="helix" evidence="2">
    <location>
        <begin position="15"/>
        <end position="37"/>
    </location>
</feature>
<name>PSBL_THAPS</name>
<proteinExistence type="evidence at protein level"/>
<sequence length="38" mass="4365">MTGPNPNKQAVELNRTSLYWGLLLIFVLAVLFSSYFFN</sequence>
<gene>
    <name evidence="1" type="primary">psbL</name>
</gene>
<evidence type="ECO:0000255" key="1">
    <source>
        <dbReference type="HAMAP-Rule" id="MF_01317"/>
    </source>
</evidence>
<evidence type="ECO:0007829" key="2">
    <source>
        <dbReference type="PDB" id="8IWH"/>
    </source>
</evidence>
<geneLocation type="chloroplast"/>
<protein>
    <recommendedName>
        <fullName evidence="1">Photosystem II reaction center protein L</fullName>
        <shortName evidence="1">PSII-L</shortName>
    </recommendedName>
</protein>
<organism>
    <name type="scientific">Thalassiosira pseudonana</name>
    <name type="common">Marine diatom</name>
    <name type="synonym">Cyclotella nana</name>
    <dbReference type="NCBI Taxonomy" id="35128"/>
    <lineage>
        <taxon>Eukaryota</taxon>
        <taxon>Sar</taxon>
        <taxon>Stramenopiles</taxon>
        <taxon>Ochrophyta</taxon>
        <taxon>Bacillariophyta</taxon>
        <taxon>Coscinodiscophyceae</taxon>
        <taxon>Thalassiosirophycidae</taxon>
        <taxon>Thalassiosirales</taxon>
        <taxon>Thalassiosiraceae</taxon>
        <taxon>Thalassiosira</taxon>
    </lineage>
</organism>
<comment type="function">
    <text evidence="1">One of the components of the core complex of photosystem II (PSII). PSII is a light-driven water:plastoquinone oxidoreductase that uses light energy to abstract electrons from H(2)O, generating O(2) and a proton gradient subsequently used for ATP formation. It consists of a core antenna complex that captures photons, and an electron transfer chain that converts photonic excitation into a charge separation. This subunit is found at the monomer-monomer interface and is required for correct PSII assembly and/or dimerization.</text>
</comment>
<comment type="subunit">
    <text evidence="1">PSII is composed of 1 copy each of membrane proteins PsbA, PsbB, PsbC, PsbD, PsbE, PsbF, PsbH, PsbI, PsbJ, PsbK, PsbL, PsbM, PsbT, PsbX, PsbY, PsbZ, Psb30/Ycf12, at least 3 peripheral proteins of the oxygen-evolving complex and a large number of cofactors. It forms dimeric complexes.</text>
</comment>
<comment type="subcellular location">
    <subcellularLocation>
        <location evidence="1">Plastid</location>
        <location evidence="1">Chloroplast thylakoid membrane</location>
        <topology evidence="1">Single-pass membrane protein</topology>
    </subcellularLocation>
</comment>
<comment type="similarity">
    <text evidence="1">Belongs to the PsbL family.</text>
</comment>